<reference key="1">
    <citation type="journal article" date="2004" name="Nature">
        <title>DNA sequence and analysis of human chromosome 9.</title>
        <authorList>
            <person name="Humphray S.J."/>
            <person name="Oliver K."/>
            <person name="Hunt A.R."/>
            <person name="Plumb R.W."/>
            <person name="Loveland J.E."/>
            <person name="Howe K.L."/>
            <person name="Andrews T.D."/>
            <person name="Searle S."/>
            <person name="Hunt S.E."/>
            <person name="Scott C.E."/>
            <person name="Jones M.C."/>
            <person name="Ainscough R."/>
            <person name="Almeida J.P."/>
            <person name="Ambrose K.D."/>
            <person name="Ashwell R.I.S."/>
            <person name="Babbage A.K."/>
            <person name="Babbage S."/>
            <person name="Bagguley C.L."/>
            <person name="Bailey J."/>
            <person name="Banerjee R."/>
            <person name="Barker D.J."/>
            <person name="Barlow K.F."/>
            <person name="Bates K."/>
            <person name="Beasley H."/>
            <person name="Beasley O."/>
            <person name="Bird C.P."/>
            <person name="Bray-Allen S."/>
            <person name="Brown A.J."/>
            <person name="Brown J.Y."/>
            <person name="Burford D."/>
            <person name="Burrill W."/>
            <person name="Burton J."/>
            <person name="Carder C."/>
            <person name="Carter N.P."/>
            <person name="Chapman J.C."/>
            <person name="Chen Y."/>
            <person name="Clarke G."/>
            <person name="Clark S.Y."/>
            <person name="Clee C.M."/>
            <person name="Clegg S."/>
            <person name="Collier R.E."/>
            <person name="Corby N."/>
            <person name="Crosier M."/>
            <person name="Cummings A.T."/>
            <person name="Davies J."/>
            <person name="Dhami P."/>
            <person name="Dunn M."/>
            <person name="Dutta I."/>
            <person name="Dyer L.W."/>
            <person name="Earthrowl M.E."/>
            <person name="Faulkner L."/>
            <person name="Fleming C.J."/>
            <person name="Frankish A."/>
            <person name="Frankland J.A."/>
            <person name="French L."/>
            <person name="Fricker D.G."/>
            <person name="Garner P."/>
            <person name="Garnett J."/>
            <person name="Ghori J."/>
            <person name="Gilbert J.G.R."/>
            <person name="Glison C."/>
            <person name="Grafham D.V."/>
            <person name="Gribble S."/>
            <person name="Griffiths C."/>
            <person name="Griffiths-Jones S."/>
            <person name="Grocock R."/>
            <person name="Guy J."/>
            <person name="Hall R.E."/>
            <person name="Hammond S."/>
            <person name="Harley J.L."/>
            <person name="Harrison E.S.I."/>
            <person name="Hart E.A."/>
            <person name="Heath P.D."/>
            <person name="Henderson C.D."/>
            <person name="Hopkins B.L."/>
            <person name="Howard P.J."/>
            <person name="Howden P.J."/>
            <person name="Huckle E."/>
            <person name="Johnson C."/>
            <person name="Johnson D."/>
            <person name="Joy A.A."/>
            <person name="Kay M."/>
            <person name="Keenan S."/>
            <person name="Kershaw J.K."/>
            <person name="Kimberley A.M."/>
            <person name="King A."/>
            <person name="Knights A."/>
            <person name="Laird G.K."/>
            <person name="Langford C."/>
            <person name="Lawlor S."/>
            <person name="Leongamornlert D.A."/>
            <person name="Leversha M."/>
            <person name="Lloyd C."/>
            <person name="Lloyd D.M."/>
            <person name="Lovell J."/>
            <person name="Martin S."/>
            <person name="Mashreghi-Mohammadi M."/>
            <person name="Matthews L."/>
            <person name="McLaren S."/>
            <person name="McLay K.E."/>
            <person name="McMurray A."/>
            <person name="Milne S."/>
            <person name="Nickerson T."/>
            <person name="Nisbett J."/>
            <person name="Nordsiek G."/>
            <person name="Pearce A.V."/>
            <person name="Peck A.I."/>
            <person name="Porter K.M."/>
            <person name="Pandian R."/>
            <person name="Pelan S."/>
            <person name="Phillimore B."/>
            <person name="Povey S."/>
            <person name="Ramsey Y."/>
            <person name="Rand V."/>
            <person name="Scharfe M."/>
            <person name="Sehra H.K."/>
            <person name="Shownkeen R."/>
            <person name="Sims S.K."/>
            <person name="Skuce C.D."/>
            <person name="Smith M."/>
            <person name="Steward C.A."/>
            <person name="Swarbreck D."/>
            <person name="Sycamore N."/>
            <person name="Tester J."/>
            <person name="Thorpe A."/>
            <person name="Tracey A."/>
            <person name="Tromans A."/>
            <person name="Thomas D.W."/>
            <person name="Wall M."/>
            <person name="Wallis J.M."/>
            <person name="West A.P."/>
            <person name="Whitehead S.L."/>
            <person name="Willey D.L."/>
            <person name="Williams S.A."/>
            <person name="Wilming L."/>
            <person name="Wray P.W."/>
            <person name="Young L."/>
            <person name="Ashurst J.L."/>
            <person name="Coulson A."/>
            <person name="Blocker H."/>
            <person name="Durbin R.M."/>
            <person name="Sulston J.E."/>
            <person name="Hubbard T."/>
            <person name="Jackson M.J."/>
            <person name="Bentley D.R."/>
            <person name="Beck S."/>
            <person name="Rogers J."/>
            <person name="Dunham I."/>
        </authorList>
    </citation>
    <scope>NUCLEOTIDE SEQUENCE [LARGE SCALE GENOMIC DNA]</scope>
</reference>
<name>RN224_HUMAN</name>
<evidence type="ECO:0000255" key="1">
    <source>
        <dbReference type="PROSITE-ProRule" id="PRU00175"/>
    </source>
</evidence>
<keyword id="KW-0479">Metal-binding</keyword>
<keyword id="KW-1185">Reference proteome</keyword>
<keyword id="KW-0862">Zinc</keyword>
<keyword id="KW-0863">Zinc-finger</keyword>
<feature type="chain" id="PRO_0000412182" description="RING finger protein 224">
    <location>
        <begin position="1"/>
        <end position="156"/>
    </location>
</feature>
<feature type="zinc finger region" description="RING-type" evidence="1">
    <location>
        <begin position="24"/>
        <end position="71"/>
    </location>
</feature>
<dbReference type="EMBL" id="BX255925">
    <property type="status" value="NOT_ANNOTATED_CDS"/>
    <property type="molecule type" value="Genomic_DNA"/>
</dbReference>
<dbReference type="CCDS" id="CCDS55356.1"/>
<dbReference type="RefSeq" id="NP_001177157.1">
    <property type="nucleotide sequence ID" value="NM_001190228.2"/>
</dbReference>
<dbReference type="RefSeq" id="XP_011517216.1">
    <property type="nucleotide sequence ID" value="XM_011518914.2"/>
</dbReference>
<dbReference type="SMR" id="P0DH78"/>
<dbReference type="BioGRID" id="568894">
    <property type="interactions" value="1"/>
</dbReference>
<dbReference type="FunCoup" id="P0DH78">
    <property type="interactions" value="5"/>
</dbReference>
<dbReference type="BioMuta" id="RNF224"/>
<dbReference type="DMDM" id="342179218"/>
<dbReference type="jPOST" id="P0DH78"/>
<dbReference type="PaxDb" id="9606-ENSP00000406665"/>
<dbReference type="Antibodypedia" id="69700">
    <property type="antibodies" value="52 antibodies from 11 providers"/>
</dbReference>
<dbReference type="DNASU" id="643596"/>
<dbReference type="Ensembl" id="ENST00000445101.4">
    <property type="protein sequence ID" value="ENSP00000406665.3"/>
    <property type="gene ID" value="ENSG00000233198.4"/>
</dbReference>
<dbReference type="GeneID" id="643596"/>
<dbReference type="KEGG" id="hsa:643596"/>
<dbReference type="MANE-Select" id="ENST00000445101.4">
    <property type="protein sequence ID" value="ENSP00000406665.3"/>
    <property type="RefSeq nucleotide sequence ID" value="NM_001190228.2"/>
    <property type="RefSeq protein sequence ID" value="NP_001177157.1"/>
</dbReference>
<dbReference type="UCSC" id="uc022bqe.2">
    <property type="organism name" value="human"/>
</dbReference>
<dbReference type="AGR" id="HGNC:41912"/>
<dbReference type="CTD" id="643596"/>
<dbReference type="GeneCards" id="RNF224"/>
<dbReference type="HGNC" id="HGNC:41912">
    <property type="gene designation" value="RNF224"/>
</dbReference>
<dbReference type="HPA" id="ENSG00000233198">
    <property type="expression patterns" value="Tissue enhanced (esophagus, pituitary gland)"/>
</dbReference>
<dbReference type="neXtProt" id="NX_P0DH78"/>
<dbReference type="OpenTargets" id="ENSG00000233198"/>
<dbReference type="VEuPathDB" id="HostDB:ENSG00000233198"/>
<dbReference type="eggNOG" id="ENOG502S2Y1">
    <property type="taxonomic scope" value="Eukaryota"/>
</dbReference>
<dbReference type="GeneTree" id="ENSGT00510000050587"/>
<dbReference type="HOGENOM" id="CLU_132997_0_0_1"/>
<dbReference type="InParanoid" id="P0DH78"/>
<dbReference type="OMA" id="ANEQRWI"/>
<dbReference type="OrthoDB" id="252722at2759"/>
<dbReference type="PAN-GO" id="P0DH78">
    <property type="GO annotations" value="0 GO annotations based on evolutionary models"/>
</dbReference>
<dbReference type="PhylomeDB" id="P0DH78"/>
<dbReference type="TreeFam" id="TF331690"/>
<dbReference type="PathwayCommons" id="P0DH78"/>
<dbReference type="SIGNOR" id="P0DH78"/>
<dbReference type="BioGRID-ORCS" id="643596">
    <property type="hits" value="14 hits in 1111 CRISPR screens"/>
</dbReference>
<dbReference type="GenomeRNAi" id="643596"/>
<dbReference type="Pharos" id="P0DH78">
    <property type="development level" value="Tdark"/>
</dbReference>
<dbReference type="PRO" id="PR:P0DH78"/>
<dbReference type="Proteomes" id="UP000005640">
    <property type="component" value="Chromosome 9"/>
</dbReference>
<dbReference type="RNAct" id="P0DH78">
    <property type="molecule type" value="protein"/>
</dbReference>
<dbReference type="Bgee" id="ENSG00000233198">
    <property type="expression patterns" value="Expressed in right uterine tube and 85 other cell types or tissues"/>
</dbReference>
<dbReference type="GO" id="GO:0008270">
    <property type="term" value="F:zinc ion binding"/>
    <property type="evidence" value="ECO:0007669"/>
    <property type="project" value="UniProtKB-KW"/>
</dbReference>
<dbReference type="Gene3D" id="3.30.40.10">
    <property type="entry name" value="Zinc/RING finger domain, C3HC4 (zinc finger)"/>
    <property type="match status" value="1"/>
</dbReference>
<dbReference type="InterPro" id="IPR053122">
    <property type="entry name" value="RING_finger_domain"/>
</dbReference>
<dbReference type="InterPro" id="IPR027370">
    <property type="entry name" value="Znf-RING_euk"/>
</dbReference>
<dbReference type="InterPro" id="IPR001841">
    <property type="entry name" value="Znf_RING"/>
</dbReference>
<dbReference type="InterPro" id="IPR013083">
    <property type="entry name" value="Znf_RING/FYVE/PHD"/>
</dbReference>
<dbReference type="InterPro" id="IPR017907">
    <property type="entry name" value="Znf_RING_CS"/>
</dbReference>
<dbReference type="PANTHER" id="PTHR47454">
    <property type="entry name" value="RING FINGER PROTEIN 224"/>
    <property type="match status" value="1"/>
</dbReference>
<dbReference type="PANTHER" id="PTHR47454:SF1">
    <property type="entry name" value="RING FINGER PROTEIN 224"/>
    <property type="match status" value="1"/>
</dbReference>
<dbReference type="Pfam" id="PF13445">
    <property type="entry name" value="zf-RING_UBOX"/>
    <property type="match status" value="1"/>
</dbReference>
<dbReference type="SMART" id="SM00184">
    <property type="entry name" value="RING"/>
    <property type="match status" value="1"/>
</dbReference>
<dbReference type="SUPFAM" id="SSF57850">
    <property type="entry name" value="RING/U-box"/>
    <property type="match status" value="1"/>
</dbReference>
<dbReference type="PROSITE" id="PS00518">
    <property type="entry name" value="ZF_RING_1"/>
    <property type="match status" value="1"/>
</dbReference>
<dbReference type="PROSITE" id="PS50089">
    <property type="entry name" value="ZF_RING_2"/>
    <property type="match status" value="1"/>
</dbReference>
<organism>
    <name type="scientific">Homo sapiens</name>
    <name type="common">Human</name>
    <dbReference type="NCBI Taxonomy" id="9606"/>
    <lineage>
        <taxon>Eukaryota</taxon>
        <taxon>Metazoa</taxon>
        <taxon>Chordata</taxon>
        <taxon>Craniata</taxon>
        <taxon>Vertebrata</taxon>
        <taxon>Euteleostomi</taxon>
        <taxon>Mammalia</taxon>
        <taxon>Eutheria</taxon>
        <taxon>Euarchontoglires</taxon>
        <taxon>Primates</taxon>
        <taxon>Haplorrhini</taxon>
        <taxon>Catarrhini</taxon>
        <taxon>Hominidae</taxon>
        <taxon>Homo</taxon>
    </lineage>
</organism>
<accession>P0DH78</accession>
<protein>
    <recommendedName>
        <fullName>RING finger protein 224</fullName>
    </recommendedName>
</protein>
<sequence>MQDAAAGGPPGLGGGGPPEERTDCIICCSAYDLSGHLPRRLYCGHTFCQACVRRLDTPAPEQRWIPCPQCRQSTPTPRGGVAMLDLDLAAFLAVKAEREPARLEPLPLTSLKGSAITRQPAGLCPALGPQPHFPQPRYCCWGCGSLCCPPLGSPEV</sequence>
<gene>
    <name type="primary">RNF224</name>
</gene>
<proteinExistence type="predicted"/>